<feature type="chain" id="PRO_0000365179" description="Eukaryotic translation initiation factor 3 subunit H">
    <location>
        <begin position="1"/>
        <end position="334"/>
    </location>
</feature>
<feature type="domain" description="MPN" evidence="2">
    <location>
        <begin position="21"/>
        <end position="155"/>
    </location>
</feature>
<feature type="region of interest" description="Disordered" evidence="3">
    <location>
        <begin position="247"/>
        <end position="284"/>
    </location>
</feature>
<feature type="compositionally biased region" description="Low complexity" evidence="3">
    <location>
        <begin position="251"/>
        <end position="262"/>
    </location>
</feature>
<gene>
    <name type="primary">eif3h</name>
    <name type="synonym">eif3s3</name>
</gene>
<evidence type="ECO:0000255" key="1">
    <source>
        <dbReference type="HAMAP-Rule" id="MF_03007"/>
    </source>
</evidence>
<evidence type="ECO:0000255" key="2">
    <source>
        <dbReference type="PROSITE-ProRule" id="PRU01182"/>
    </source>
</evidence>
<evidence type="ECO:0000256" key="3">
    <source>
        <dbReference type="SAM" id="MobiDB-lite"/>
    </source>
</evidence>
<organism>
    <name type="scientific">Xenopus laevis</name>
    <name type="common">African clawed frog</name>
    <dbReference type="NCBI Taxonomy" id="8355"/>
    <lineage>
        <taxon>Eukaryota</taxon>
        <taxon>Metazoa</taxon>
        <taxon>Chordata</taxon>
        <taxon>Craniata</taxon>
        <taxon>Vertebrata</taxon>
        <taxon>Euteleostomi</taxon>
        <taxon>Amphibia</taxon>
        <taxon>Batrachia</taxon>
        <taxon>Anura</taxon>
        <taxon>Pipoidea</taxon>
        <taxon>Pipidae</taxon>
        <taxon>Xenopodinae</taxon>
        <taxon>Xenopus</taxon>
        <taxon>Xenopus</taxon>
    </lineage>
</organism>
<dbReference type="EMBL" id="BC087438">
    <property type="protein sequence ID" value="AAH87438.1"/>
    <property type="molecule type" value="mRNA"/>
</dbReference>
<dbReference type="RefSeq" id="NP_001088779.1">
    <property type="nucleotide sequence ID" value="NM_001095310.1"/>
</dbReference>
<dbReference type="SMR" id="Q5PPY6"/>
<dbReference type="BioGRID" id="106123">
    <property type="interactions" value="2"/>
</dbReference>
<dbReference type="IntAct" id="Q5PPY6">
    <property type="interactions" value="1"/>
</dbReference>
<dbReference type="MEROPS" id="M67.971"/>
<dbReference type="DNASU" id="496043"/>
<dbReference type="GeneID" id="496043"/>
<dbReference type="KEGG" id="xla:496043"/>
<dbReference type="AGR" id="Xenbase:XB-GENE-958120"/>
<dbReference type="CTD" id="496043"/>
<dbReference type="Xenbase" id="XB-GENE-958120">
    <property type="gene designation" value="eif3h.S"/>
</dbReference>
<dbReference type="OrthoDB" id="10265695at2759"/>
<dbReference type="Proteomes" id="UP000186698">
    <property type="component" value="Chromosome 6S"/>
</dbReference>
<dbReference type="Bgee" id="496043">
    <property type="expression patterns" value="Expressed in oocyte and 19 other cell types or tissues"/>
</dbReference>
<dbReference type="GO" id="GO:0016282">
    <property type="term" value="C:eukaryotic 43S preinitiation complex"/>
    <property type="evidence" value="ECO:0000318"/>
    <property type="project" value="GO_Central"/>
</dbReference>
<dbReference type="GO" id="GO:0033290">
    <property type="term" value="C:eukaryotic 48S preinitiation complex"/>
    <property type="evidence" value="ECO:0007669"/>
    <property type="project" value="UniProtKB-UniRule"/>
</dbReference>
<dbReference type="GO" id="GO:0005852">
    <property type="term" value="C:eukaryotic translation initiation factor 3 complex"/>
    <property type="evidence" value="ECO:0000250"/>
    <property type="project" value="UniProtKB"/>
</dbReference>
<dbReference type="GO" id="GO:0008237">
    <property type="term" value="F:metallopeptidase activity"/>
    <property type="evidence" value="ECO:0000318"/>
    <property type="project" value="GO_Central"/>
</dbReference>
<dbReference type="GO" id="GO:0003743">
    <property type="term" value="F:translation initiation factor activity"/>
    <property type="evidence" value="ECO:0007669"/>
    <property type="project" value="UniProtKB-UniRule"/>
</dbReference>
<dbReference type="GO" id="GO:0001732">
    <property type="term" value="P:formation of cytoplasmic translation initiation complex"/>
    <property type="evidence" value="ECO:0007669"/>
    <property type="project" value="UniProtKB-UniRule"/>
</dbReference>
<dbReference type="GO" id="GO:0006413">
    <property type="term" value="P:translational initiation"/>
    <property type="evidence" value="ECO:0000250"/>
    <property type="project" value="UniProtKB"/>
</dbReference>
<dbReference type="CDD" id="cd08065">
    <property type="entry name" value="MPN_eIF3h"/>
    <property type="match status" value="1"/>
</dbReference>
<dbReference type="FunFam" id="3.40.140.10:FF:000020">
    <property type="entry name" value="Eukaryotic translation initiation factor 3 subunit H"/>
    <property type="match status" value="1"/>
</dbReference>
<dbReference type="Gene3D" id="3.40.140.10">
    <property type="entry name" value="Cytidine Deaminase, domain 2"/>
    <property type="match status" value="1"/>
</dbReference>
<dbReference type="HAMAP" id="MF_03007">
    <property type="entry name" value="eIF3h"/>
    <property type="match status" value="1"/>
</dbReference>
<dbReference type="InterPro" id="IPR027524">
    <property type="entry name" value="eIF3h"/>
</dbReference>
<dbReference type="InterPro" id="IPR045810">
    <property type="entry name" value="eIF3h_C"/>
</dbReference>
<dbReference type="InterPro" id="IPR000555">
    <property type="entry name" value="JAMM/MPN+_dom"/>
</dbReference>
<dbReference type="InterPro" id="IPR050242">
    <property type="entry name" value="JAMM_MPN+_peptidase_M67A"/>
</dbReference>
<dbReference type="InterPro" id="IPR037518">
    <property type="entry name" value="MPN"/>
</dbReference>
<dbReference type="PANTHER" id="PTHR10410">
    <property type="entry name" value="EUKARYOTIC TRANSLATION INITIATION FACTOR 3 -RELATED"/>
    <property type="match status" value="1"/>
</dbReference>
<dbReference type="Pfam" id="PF19445">
    <property type="entry name" value="eIF3h_C"/>
    <property type="match status" value="1"/>
</dbReference>
<dbReference type="Pfam" id="PF01398">
    <property type="entry name" value="JAB"/>
    <property type="match status" value="1"/>
</dbReference>
<dbReference type="SMART" id="SM00232">
    <property type="entry name" value="JAB_MPN"/>
    <property type="match status" value="1"/>
</dbReference>
<dbReference type="PROSITE" id="PS50249">
    <property type="entry name" value="MPN"/>
    <property type="match status" value="1"/>
</dbReference>
<reference key="1">
    <citation type="submission" date="2004-12" db="EMBL/GenBank/DDBJ databases">
        <authorList>
            <consortium name="NIH - Xenopus Gene Collection (XGC) project"/>
        </authorList>
    </citation>
    <scope>NUCLEOTIDE SEQUENCE [LARGE SCALE MRNA]</scope>
    <source>
        <tissue>Testis</tissue>
    </source>
</reference>
<proteinExistence type="evidence at transcript level"/>
<name>EIF3H_XENLA</name>
<accession>Q5PPY6</accession>
<comment type="function">
    <text evidence="1">Component of the eukaryotic translation initiation factor 3 (eIF-3) complex, which is involved in protein synthesis of a specialized repertoire of mRNAs and, together with other initiation factors, stimulates binding of mRNA and methionyl-tRNAi to the 40S ribosome. The eIF-3 complex specifically targets and initiates translation of a subset of mRNAs involved in cell proliferation.</text>
</comment>
<comment type="subunit">
    <text evidence="1">Component of the eukaryotic translation initiation factor 3 (eIF-3) complex, which is composed of 13 subunits: eif3a, eif3b, eif3c, eif3d, eif3e, eif3f, eif3g, eif3h, eif3i, eif3j, eif3k, eif3l and eif3m.</text>
</comment>
<comment type="subcellular location">
    <subcellularLocation>
        <location evidence="1">Cytoplasm</location>
    </subcellularLocation>
</comment>
<comment type="similarity">
    <text evidence="1">Belongs to the eIF-3 subunit H family.</text>
</comment>
<keyword id="KW-0963">Cytoplasm</keyword>
<keyword id="KW-0396">Initiation factor</keyword>
<keyword id="KW-0648">Protein biosynthesis</keyword>
<keyword id="KW-1185">Reference proteome</keyword>
<sequence>MAARKETGNTAPIAETAVKQVQIDGLVVLKIIKHYQEEGHGSEVVQGVLLGLVVDDRLEITNCFPFPQHTEDDVDFDEVQYQMEMMRSLRHVNIDHLHVGWYQSTFYGTFVSRALLDSQFSYQHAIEESVVLIYDPIKTSQGSLSLKAYRLTPKLMEICKEKDFSAEGLKKANVAYEDMFEEVPIVIKNSHLINVLVWELDKKAPVTEKHELLNLSSSNHLEKSLQLLMDRVDEMSQDIVKYNTYQRNVGKQQQQKHQYTQRKQQENLQRLSRGETPLPEEDVNKMFKPPVTPSRMDPLLIAGQINTYIQHIKGFTSQNLGKLFMAEALQDQTN</sequence>
<protein>
    <recommendedName>
        <fullName evidence="1">Eukaryotic translation initiation factor 3 subunit H</fullName>
        <shortName evidence="1">eIF3h</shortName>
    </recommendedName>
    <alternativeName>
        <fullName evidence="1">Eukaryotic translation initiation factor 3 subunit 3</fullName>
    </alternativeName>
    <alternativeName>
        <fullName>eIF-3-gamma</fullName>
    </alternativeName>
    <alternativeName>
        <fullName evidence="1">eIF3 p40 subunit</fullName>
    </alternativeName>
</protein>